<protein>
    <recommendedName>
        <fullName>DNA-directed RNA polymerase subunit beta C-terminal section</fullName>
        <ecNumber>2.7.7.6</ecNumber>
    </recommendedName>
    <alternativeName>
        <fullName>PEP</fullName>
    </alternativeName>
    <alternativeName>
        <fullName>Plastid-encoded RNA polymerase subunit beta C-terminal section</fullName>
        <shortName>RNA polymerase subunit beta C-terminal section</shortName>
    </alternativeName>
</protein>
<feature type="chain" id="PRO_0000048017" description="DNA-directed RNA polymerase subunit beta C-terminal section">
    <location>
        <begin position="1"/>
        <end position="626"/>
    </location>
</feature>
<feature type="region of interest" description="Disordered" evidence="2">
    <location>
        <begin position="287"/>
        <end position="307"/>
    </location>
</feature>
<geneLocation type="chloroplast"/>
<comment type="function">
    <text>DNA-dependent RNA polymerase catalyzes the transcription of DNA into RNA using the four ribonucleoside triphosphates as substrates.</text>
</comment>
<comment type="catalytic activity">
    <reaction>
        <text>RNA(n) + a ribonucleoside 5'-triphosphate = RNA(n+1) + diphosphate</text>
        <dbReference type="Rhea" id="RHEA:21248"/>
        <dbReference type="Rhea" id="RHEA-COMP:14527"/>
        <dbReference type="Rhea" id="RHEA-COMP:17342"/>
        <dbReference type="ChEBI" id="CHEBI:33019"/>
        <dbReference type="ChEBI" id="CHEBI:61557"/>
        <dbReference type="ChEBI" id="CHEBI:140395"/>
        <dbReference type="EC" id="2.7.7.6"/>
    </reaction>
</comment>
<comment type="subunit">
    <text evidence="1">In plastids the minimal PEP RNA polymerase catalytic core is composed of four subunits: alpha, beta, beta', and beta''. When a (nuclear-encoded) sigma factor is associated with the core the holoenzyme is formed, which can initiate transcription (By similarity).</text>
</comment>
<comment type="subcellular location">
    <subcellularLocation>
        <location>Plastid</location>
        <location>Chloroplast</location>
    </subcellularLocation>
</comment>
<comment type="miscellaneous">
    <text>In C.reinhardtii the gene for this protein is split in two.</text>
</comment>
<comment type="similarity">
    <text evidence="3">Belongs to the RNA polymerase beta chain family.</text>
</comment>
<proteinExistence type="evidence at transcript level"/>
<keyword id="KW-0150">Chloroplast</keyword>
<keyword id="KW-0240">DNA-directed RNA polymerase</keyword>
<keyword id="KW-0548">Nucleotidyltransferase</keyword>
<keyword id="KW-0934">Plastid</keyword>
<keyword id="KW-1185">Reference proteome</keyword>
<keyword id="KW-0804">Transcription</keyword>
<keyword id="KW-0808">Transferase</keyword>
<dbReference type="EC" id="2.7.7.6"/>
<dbReference type="EMBL" id="AY160684">
    <property type="protein sequence ID" value="AAN41267.1"/>
    <property type="molecule type" value="Genomic_DNA"/>
</dbReference>
<dbReference type="EMBL" id="FJ423446">
    <property type="protein sequence ID" value="ACJ50128.1"/>
    <property type="molecule type" value="Genomic_DNA"/>
</dbReference>
<dbReference type="EMBL" id="BK000554">
    <property type="protein sequence ID" value="DAA00942.1"/>
    <property type="molecule type" value="Genomic_DNA"/>
</dbReference>
<dbReference type="PIR" id="S26873">
    <property type="entry name" value="S26873"/>
</dbReference>
<dbReference type="SMR" id="Q8HTL7"/>
<dbReference type="STRING" id="3055.Q8HTL7"/>
<dbReference type="PaxDb" id="3055-DAA00942"/>
<dbReference type="KEGG" id="cre:ChreCp041"/>
<dbReference type="eggNOG" id="KOG0214">
    <property type="taxonomic scope" value="Eukaryota"/>
</dbReference>
<dbReference type="HOGENOM" id="CLU_000524_4_2_1"/>
<dbReference type="InParanoid" id="Q8HTL7"/>
<dbReference type="Proteomes" id="UP000006906">
    <property type="component" value="Chloroplast"/>
</dbReference>
<dbReference type="GO" id="GO:0009507">
    <property type="term" value="C:chloroplast"/>
    <property type="evidence" value="ECO:0007669"/>
    <property type="project" value="UniProtKB-SubCell"/>
</dbReference>
<dbReference type="GO" id="GO:0000428">
    <property type="term" value="C:DNA-directed RNA polymerase complex"/>
    <property type="evidence" value="ECO:0007669"/>
    <property type="project" value="UniProtKB-KW"/>
</dbReference>
<dbReference type="GO" id="GO:0005739">
    <property type="term" value="C:mitochondrion"/>
    <property type="evidence" value="ECO:0007669"/>
    <property type="project" value="GOC"/>
</dbReference>
<dbReference type="GO" id="GO:0003677">
    <property type="term" value="F:DNA binding"/>
    <property type="evidence" value="ECO:0007669"/>
    <property type="project" value="InterPro"/>
</dbReference>
<dbReference type="GO" id="GO:0003899">
    <property type="term" value="F:DNA-directed RNA polymerase activity"/>
    <property type="evidence" value="ECO:0007669"/>
    <property type="project" value="UniProtKB-EC"/>
</dbReference>
<dbReference type="GO" id="GO:0032549">
    <property type="term" value="F:ribonucleoside binding"/>
    <property type="evidence" value="ECO:0007669"/>
    <property type="project" value="InterPro"/>
</dbReference>
<dbReference type="GO" id="GO:0006351">
    <property type="term" value="P:DNA-templated transcription"/>
    <property type="evidence" value="ECO:0007669"/>
    <property type="project" value="InterPro"/>
</dbReference>
<dbReference type="CDD" id="cd00653">
    <property type="entry name" value="RNA_pol_B_RPB2"/>
    <property type="match status" value="1"/>
</dbReference>
<dbReference type="Gene3D" id="2.40.50.100">
    <property type="match status" value="1"/>
</dbReference>
<dbReference type="Gene3D" id="2.40.50.150">
    <property type="match status" value="1"/>
</dbReference>
<dbReference type="Gene3D" id="2.40.270.10">
    <property type="entry name" value="DNA-directed RNA polymerase, subunit 2, domain 6"/>
    <property type="match status" value="1"/>
</dbReference>
<dbReference type="Gene3D" id="3.90.1800.10">
    <property type="entry name" value="RNA polymerase alpha subunit dimerisation domain"/>
    <property type="match status" value="1"/>
</dbReference>
<dbReference type="InterPro" id="IPR015712">
    <property type="entry name" value="DNA-dir_RNA_pol_su2"/>
</dbReference>
<dbReference type="InterPro" id="IPR007120">
    <property type="entry name" value="DNA-dir_RNAP_su2_dom"/>
</dbReference>
<dbReference type="InterPro" id="IPR037033">
    <property type="entry name" value="DNA-dir_RNAP_su2_hyb_sf"/>
</dbReference>
<dbReference type="InterPro" id="IPR007121">
    <property type="entry name" value="RNA_pol_bsu_CS"/>
</dbReference>
<dbReference type="InterPro" id="IPR007641">
    <property type="entry name" value="RNA_pol_Rpb2_7"/>
</dbReference>
<dbReference type="InterPro" id="IPR014724">
    <property type="entry name" value="RNA_pol_RPB2_OB-fold"/>
</dbReference>
<dbReference type="PANTHER" id="PTHR20856">
    <property type="entry name" value="DNA-DIRECTED RNA POLYMERASE I SUBUNIT 2"/>
    <property type="match status" value="1"/>
</dbReference>
<dbReference type="Pfam" id="PF00562">
    <property type="entry name" value="RNA_pol_Rpb2_6"/>
    <property type="match status" value="1"/>
</dbReference>
<dbReference type="Pfam" id="PF04560">
    <property type="entry name" value="RNA_pol_Rpb2_7"/>
    <property type="match status" value="1"/>
</dbReference>
<dbReference type="SUPFAM" id="SSF64484">
    <property type="entry name" value="beta and beta-prime subunits of DNA dependent RNA-polymerase"/>
    <property type="match status" value="1"/>
</dbReference>
<dbReference type="PROSITE" id="PS01166">
    <property type="entry name" value="RNA_POL_BETA"/>
    <property type="match status" value="1"/>
</dbReference>
<name>RPOB2_CHLRE</name>
<organism>
    <name type="scientific">Chlamydomonas reinhardtii</name>
    <name type="common">Chlamydomonas smithii</name>
    <dbReference type="NCBI Taxonomy" id="3055"/>
    <lineage>
        <taxon>Eukaryota</taxon>
        <taxon>Viridiplantae</taxon>
        <taxon>Chlorophyta</taxon>
        <taxon>core chlorophytes</taxon>
        <taxon>Chlorophyceae</taxon>
        <taxon>CS clade</taxon>
        <taxon>Chlamydomonadales</taxon>
        <taxon>Chlamydomonadaceae</taxon>
        <taxon>Chlamydomonas</taxon>
    </lineage>
</organism>
<accession>Q8HTL7</accession>
<accession>B7U1I1</accession>
<gene>
    <name type="primary">rpoB2</name>
</gene>
<sequence length="626" mass="70430">MTYSILTESIYNFKKKSSLDMQFLSPKNFQIENFTKIHDQTLPLKPFKTNRTAVAVVPPLPIFSPELYKRQNKLKKTQNATIFSMGTSAFKNQVKYNLETYHRSNQDTCLIHKPAVKEGDWVEVGDLLADSASSIGGELAIGHNIIVAYMPWEGYNYEDAILINERLVYEDIYTSIHIERYEVTTKETKLGFEQITREIPDISENEIKHLDKTGIAKIGSWVEEGDILVGKITPFNIKTLTPQQKLLYKIFDKQLSTTKDSSLRAPKGIKANVININILARQKIQINTKSKNTGKGSKPPRASKAQNTMVSQPSYIHIYLAEKRKMQVGDKMAGRHGNKGIVSRILPRQDMPFLPDGAAVDIVLNPLGVPSRMNVGQIYECLLGLAGRYLGEHYKIPPFDEMYGADASRSFVLSKLYEARKKTGLKWLLDPNHPGKIRLFDGRNSECFDQTVTVGIAYVLKLVHMVDDKMHARSTGPYSLVTQQPLRGRSKQGGQRLGEMEVWAIEGYGAAFVLSEMLTIKSDDMTGRQNLWKNLIENKEISLGSPESFKVLICELQALCLDIGLFRKNKETSLPYFKMPGEESKTNVNANLTGVQSSKKLEANSQTVKNSSMPNLVEIDNLLNLA</sequence>
<evidence type="ECO:0000250" key="1"/>
<evidence type="ECO:0000256" key="2">
    <source>
        <dbReference type="SAM" id="MobiDB-lite"/>
    </source>
</evidence>
<evidence type="ECO:0000305" key="3"/>
<reference key="1">
    <citation type="journal article" date="1992" name="Curr. Genet.">
        <title>Chloroplast RNA polymerase genes of Chlamydomonas reinhardtii exhibit an unusual structure and arrangement.</title>
        <authorList>
            <person name="Fong S.E."/>
            <person name="Surzycki S.J."/>
        </authorList>
    </citation>
    <scope>NUCLEOTIDE SEQUENCE [GENOMIC DNA]</scope>
</reference>
<reference key="2">
    <citation type="journal article" date="2009" name="BMC Evol. Biol.">
        <title>Nucleotide diversity of the Chlamydomonas reinhardtii plastid genome: addressing the mutational-hazard hypothesis.</title>
        <authorList>
            <person name="Smith D.R."/>
            <person name="Lee R.W."/>
        </authorList>
    </citation>
    <scope>NUCLEOTIDE SEQUENCE [LARGE SCALE GENOMIC DNA]</scope>
    <source>
        <strain>CC-503</strain>
    </source>
</reference>
<reference key="3">
    <citation type="journal article" date="2002" name="Plant Cell">
        <title>The Chlamydomonas reinhardtii plastid chromosome: islands of genes in a sea of repeats.</title>
        <authorList>
            <person name="Maul J.E."/>
            <person name="Lilly J.W."/>
            <person name="Cui L."/>
            <person name="dePamphilis C.W."/>
            <person name="Miller W."/>
            <person name="Harris E.H."/>
            <person name="Stern D.B."/>
        </authorList>
    </citation>
    <scope>IDENTIFICATION</scope>
    <scope>COMPLETE PLASTID GENOME</scope>
</reference>